<keyword id="KW-0007">Acetylation</keyword>
<keyword id="KW-0025">Alternative splicing</keyword>
<keyword id="KW-0900">Congenital disorder of glycosylation</keyword>
<keyword id="KW-0225">Disease variant</keyword>
<keyword id="KW-0472">Membrane</keyword>
<keyword id="KW-1267">Proteomics identification</keyword>
<keyword id="KW-1185">Reference proteome</keyword>
<keyword id="KW-0677">Repeat</keyword>
<keyword id="KW-0812">Transmembrane</keyword>
<keyword id="KW-1133">Transmembrane helix</keyword>
<keyword id="KW-0813">Transport</keyword>
<accession>O75352</accession>
<accession>B3KQP1</accession>
<accession>B4DT74</accession>
<accession>Q9BUU8</accession>
<name>MPU1_HUMAN</name>
<sequence>MAAEADGPLKRLLVPILLPEKCYDQLFVQWDLLHVPCLKILLSKGLGLGIVAGSLLVKLPQVFKILGAKSAEGLSLQSVMLELVALTGTMVYSITNNFPFSSWGEALFLMLQTITICFLVMHYRGQTVKGVAFLACYGLVLLVLLSPLTPLTVVTLLQASNVPAVVVGRLLQAATNYHNGHTGQLSAITVFLLFGGSLARIFTSIQETGDPLMAGTFVVSSLCNGLIAAQLLFYWNAKPPHKQKKAQ</sequence>
<organism>
    <name type="scientific">Homo sapiens</name>
    <name type="common">Human</name>
    <dbReference type="NCBI Taxonomy" id="9606"/>
    <lineage>
        <taxon>Eukaryota</taxon>
        <taxon>Metazoa</taxon>
        <taxon>Chordata</taxon>
        <taxon>Craniata</taxon>
        <taxon>Vertebrata</taxon>
        <taxon>Euteleostomi</taxon>
        <taxon>Mammalia</taxon>
        <taxon>Eutheria</taxon>
        <taxon>Euarchontoglires</taxon>
        <taxon>Primates</taxon>
        <taxon>Haplorrhini</taxon>
        <taxon>Catarrhini</taxon>
        <taxon>Hominidae</taxon>
        <taxon>Homo</taxon>
    </lineage>
</organism>
<comment type="function">
    <text evidence="1">Required for normal utilization of mannose-dolichol phosphate (Dol-P-Man) in the synthesis of N-linked and O-linked oligosaccharides and GPI anchors.</text>
</comment>
<comment type="interaction">
    <interactant intactId="EBI-1046501">
        <id>O75352</id>
    </interactant>
    <interactant intactId="EBI-3867271">
        <id>Q9NQG1</id>
        <label>MANBAL</label>
    </interactant>
    <organismsDiffer>false</organismsDiffer>
    <experiments>3</experiments>
</comment>
<comment type="subcellular location">
    <subcellularLocation>
        <location evidence="7">Membrane</location>
        <topology evidence="7">Multi-pass membrane protein</topology>
    </subcellularLocation>
</comment>
<comment type="alternative products">
    <event type="alternative splicing"/>
    <isoform>
        <id>O75352-1</id>
        <name>1</name>
        <sequence type="displayed"/>
    </isoform>
    <isoform>
        <id>O75352-2</id>
        <name>2</name>
        <sequence type="described" ref="VSP_056349 VSP_056350"/>
    </isoform>
</comment>
<comment type="disease" evidence="3 4">
    <disease id="DI-00338">
        <name>Congenital disorder of glycosylation 1F</name>
        <acronym>CDG1F</acronym>
        <description>A form of congenital disorder of glycosylation, a multisystem disorder caused by a defect in glycoprotein biosynthesis and characterized by under-glycosylated serum glycoproteins. Congenital disorders of glycosylation result in a wide variety of clinical features, such as defects in the nervous system development, psychomotor retardation, dysmorphic features, hypotonia, coagulation disorders, and immunodeficiency. The broad spectrum of features reflects the critical role of N-glycoproteins during embryonic development, differentiation, and maintenance of cell functions.</description>
        <dbReference type="MIM" id="609180"/>
    </disease>
    <text>The disease is caused by variants affecting the gene represented in this entry.</text>
</comment>
<comment type="similarity">
    <text evidence="7">Belongs to the MPDU1 (TC 2.A.43.3) family.</text>
</comment>
<feature type="initiator methionine" description="Removed" evidence="8 9 10">
    <location>
        <position position="1"/>
    </location>
</feature>
<feature type="chain" id="PRO_0000221034" description="Mannose-P-dolichol utilization defect 1 protein">
    <location>
        <begin position="2"/>
        <end position="247"/>
    </location>
</feature>
<feature type="transmembrane region" description="Helical" evidence="2">
    <location>
        <begin position="37"/>
        <end position="57"/>
    </location>
</feature>
<feature type="transmembrane region" description="Helical" evidence="2">
    <location>
        <begin position="74"/>
        <end position="94"/>
    </location>
</feature>
<feature type="transmembrane region" description="Helical" evidence="2">
    <location>
        <begin position="100"/>
        <end position="120"/>
    </location>
</feature>
<feature type="transmembrane region" description="Helical" evidence="2">
    <location>
        <begin position="128"/>
        <end position="145"/>
    </location>
</feature>
<feature type="transmembrane region" description="Helical" evidence="2">
    <location>
        <begin position="151"/>
        <end position="171"/>
    </location>
</feature>
<feature type="transmembrane region" description="Helical" evidence="2">
    <location>
        <begin position="185"/>
        <end position="205"/>
    </location>
</feature>
<feature type="transmembrane region" description="Helical" evidence="2">
    <location>
        <begin position="213"/>
        <end position="233"/>
    </location>
</feature>
<feature type="domain" description="PQ-loop 1">
    <location>
        <begin position="39"/>
        <end position="105"/>
    </location>
</feature>
<feature type="domain" description="PQ-loop 2">
    <location>
        <begin position="159"/>
        <end position="216"/>
    </location>
</feature>
<feature type="modified residue" description="N-acetylalanine" evidence="8 9 10">
    <location>
        <position position="2"/>
    </location>
</feature>
<feature type="splice variant" id="VSP_056349" description="In isoform 2." evidence="6">
    <original>SSWGEALFLMLQTITICFLVMHYRGQTVKGVAFLACYGLVLLVLLSPLTPLTVVTLLQASNVPAVVVGRLLQAATNYHNGHTGQLS</original>
    <variation>RCRFPRLLRPGPAGASLTSDALDCSHPAPGLQCACCGGGEASPGSHQLPQRAHRPALSHHSLPAVWGLPGPNLHFHSGVSIPFSQL</variation>
    <location>
        <begin position="101"/>
        <end position="186"/>
    </location>
</feature>
<feature type="splice variant" id="VSP_056350" description="In isoform 2." evidence="6">
    <location>
        <begin position="187"/>
        <end position="247"/>
    </location>
</feature>
<feature type="sequence variant" id="VAR_021388" description="In CDG1F; dbSNP:rs104894586." evidence="4">
    <original>G</original>
    <variation>E</variation>
    <location>
        <position position="73"/>
    </location>
</feature>
<feature type="sequence variant" id="VAR_021389" description="In CDG1F; dbSNP:rs104894589." evidence="3">
    <original>L</original>
    <variation>S</variation>
    <location>
        <position position="74"/>
    </location>
</feature>
<feature type="sequence variant" id="VAR_021390" description="In CDG1F; dbSNP:rs104894587." evidence="4">
    <original>L</original>
    <variation>P</variation>
    <location>
        <position position="119"/>
    </location>
</feature>
<feature type="sequence variant" id="VAR_047757" description="In dbSNP:rs16956808.">
    <original>G</original>
    <variation>S</variation>
    <location>
        <position position="225"/>
    </location>
</feature>
<feature type="sequence variant" id="VAR_047758" description="In dbSNP:rs10852891." evidence="5">
    <original>A</original>
    <variation>T</variation>
    <location>
        <position position="229"/>
    </location>
</feature>
<feature type="sequence conflict" description="In Ref. 1; AAC39875." evidence="7" ref="1">
    <original>L</original>
    <variation>R</variation>
    <location>
        <position position="66"/>
    </location>
</feature>
<feature type="sequence conflict" description="In Ref. 1; AAC39875." evidence="7" ref="1">
    <original>H</original>
    <variation>Y</variation>
    <location>
        <position position="181"/>
    </location>
</feature>
<dbReference type="EMBL" id="AF038961">
    <property type="protein sequence ID" value="AAC39875.1"/>
    <property type="molecule type" value="mRNA"/>
</dbReference>
<dbReference type="EMBL" id="AK075299">
    <property type="protein sequence ID" value="BAG52103.1"/>
    <property type="molecule type" value="mRNA"/>
</dbReference>
<dbReference type="EMBL" id="AK300083">
    <property type="protein sequence ID" value="BAG61886.1"/>
    <property type="molecule type" value="mRNA"/>
</dbReference>
<dbReference type="EMBL" id="AC016876">
    <property type="status" value="NOT_ANNOTATED_CDS"/>
    <property type="molecule type" value="Genomic_DNA"/>
</dbReference>
<dbReference type="EMBL" id="FJ695203">
    <property type="status" value="NOT_ANNOTATED_CDS"/>
    <property type="molecule type" value="Genomic_DNA"/>
</dbReference>
<dbReference type="EMBL" id="CH471108">
    <property type="protein sequence ID" value="EAW90161.1"/>
    <property type="molecule type" value="Genomic_DNA"/>
</dbReference>
<dbReference type="EMBL" id="BC001898">
    <property type="protein sequence ID" value="AAH01898.1"/>
    <property type="molecule type" value="mRNA"/>
</dbReference>
<dbReference type="CCDS" id="CCDS11115.1">
    <molecule id="O75352-1"/>
</dbReference>
<dbReference type="RefSeq" id="NP_001317002.1">
    <property type="nucleotide sequence ID" value="NM_001330073.1"/>
</dbReference>
<dbReference type="RefSeq" id="NP_004861.2">
    <molecule id="O75352-1"/>
    <property type="nucleotide sequence ID" value="NM_004870.4"/>
</dbReference>
<dbReference type="BioGRID" id="114902">
    <property type="interactions" value="74"/>
</dbReference>
<dbReference type="FunCoup" id="O75352">
    <property type="interactions" value="1436"/>
</dbReference>
<dbReference type="IntAct" id="O75352">
    <property type="interactions" value="27"/>
</dbReference>
<dbReference type="STRING" id="9606.ENSP00000250124"/>
<dbReference type="GlyGen" id="O75352">
    <property type="glycosylation" value="1 site, 1 O-linked glycan (1 site)"/>
</dbReference>
<dbReference type="iPTMnet" id="O75352"/>
<dbReference type="PhosphoSitePlus" id="O75352"/>
<dbReference type="SwissPalm" id="O75352"/>
<dbReference type="BioMuta" id="MPDU1"/>
<dbReference type="jPOST" id="O75352"/>
<dbReference type="MassIVE" id="O75352"/>
<dbReference type="PaxDb" id="9606-ENSP00000250124"/>
<dbReference type="PeptideAtlas" id="O75352"/>
<dbReference type="ProteomicsDB" id="49919">
    <molecule id="O75352-1"/>
</dbReference>
<dbReference type="ProteomicsDB" id="5083"/>
<dbReference type="Pumba" id="O75352"/>
<dbReference type="TopDownProteomics" id="O75352-1">
    <molecule id="O75352-1"/>
</dbReference>
<dbReference type="Antibodypedia" id="12103">
    <property type="antibodies" value="93 antibodies from 16 providers"/>
</dbReference>
<dbReference type="DNASU" id="9526"/>
<dbReference type="Ensembl" id="ENST00000250124.11">
    <molecule id="O75352-1"/>
    <property type="protein sequence ID" value="ENSP00000250124.6"/>
    <property type="gene ID" value="ENSG00000129255.16"/>
</dbReference>
<dbReference type="Ensembl" id="ENST00000423172.6">
    <molecule id="O75352-2"/>
    <property type="protein sequence ID" value="ENSP00000414071.2"/>
    <property type="gene ID" value="ENSG00000129255.16"/>
</dbReference>
<dbReference type="GeneID" id="9526"/>
<dbReference type="KEGG" id="hsa:9526"/>
<dbReference type="MANE-Select" id="ENST00000250124.11">
    <property type="protein sequence ID" value="ENSP00000250124.6"/>
    <property type="RefSeq nucleotide sequence ID" value="NM_004870.4"/>
    <property type="RefSeq protein sequence ID" value="NP_004861.2"/>
</dbReference>
<dbReference type="UCSC" id="uc002ghw.4">
    <molecule id="O75352-1"/>
    <property type="organism name" value="human"/>
</dbReference>
<dbReference type="AGR" id="HGNC:7207"/>
<dbReference type="CTD" id="9526"/>
<dbReference type="DisGeNET" id="9526"/>
<dbReference type="GeneCards" id="MPDU1"/>
<dbReference type="HGNC" id="HGNC:7207">
    <property type="gene designation" value="MPDU1"/>
</dbReference>
<dbReference type="HPA" id="ENSG00000129255">
    <property type="expression patterns" value="Low tissue specificity"/>
</dbReference>
<dbReference type="MalaCards" id="MPDU1"/>
<dbReference type="MIM" id="604041">
    <property type="type" value="gene"/>
</dbReference>
<dbReference type="MIM" id="609180">
    <property type="type" value="phenotype"/>
</dbReference>
<dbReference type="neXtProt" id="NX_O75352"/>
<dbReference type="OpenTargets" id="ENSG00000129255"/>
<dbReference type="Orphanet" id="79323">
    <property type="disease" value="MPDU1-CDG"/>
</dbReference>
<dbReference type="PharmGKB" id="PA30913"/>
<dbReference type="VEuPathDB" id="HostDB:ENSG00000129255"/>
<dbReference type="eggNOG" id="KOG3211">
    <property type="taxonomic scope" value="Eukaryota"/>
</dbReference>
<dbReference type="GeneTree" id="ENSGT00940000153916"/>
<dbReference type="HOGENOM" id="CLU_053568_2_0_1"/>
<dbReference type="InParanoid" id="O75352"/>
<dbReference type="OMA" id="LQVLYYW"/>
<dbReference type="OrthoDB" id="271506at2759"/>
<dbReference type="PAN-GO" id="O75352">
    <property type="GO annotations" value="1 GO annotation based on evolutionary models"/>
</dbReference>
<dbReference type="PhylomeDB" id="O75352"/>
<dbReference type="TreeFam" id="TF324895"/>
<dbReference type="PathwayCommons" id="O75352"/>
<dbReference type="Reactome" id="R-HSA-446193">
    <property type="pathway name" value="Biosynthesis of the N-glycan precursor (dolichol lipid-linked oligosaccharide, LLO) and transfer to a nascent protein"/>
</dbReference>
<dbReference type="Reactome" id="R-HSA-4687000">
    <property type="pathway name" value="Defective MPDU1 causes CDG-1f"/>
</dbReference>
<dbReference type="SignaLink" id="O75352"/>
<dbReference type="BioGRID-ORCS" id="9526">
    <property type="hits" value="63 hits in 1172 CRISPR screens"/>
</dbReference>
<dbReference type="ChiTaRS" id="MPDU1">
    <property type="organism name" value="human"/>
</dbReference>
<dbReference type="GeneWiki" id="MPDU1"/>
<dbReference type="GenomeRNAi" id="9526"/>
<dbReference type="Pharos" id="O75352">
    <property type="development level" value="Tbio"/>
</dbReference>
<dbReference type="PRO" id="PR:O75352"/>
<dbReference type="Proteomes" id="UP000005640">
    <property type="component" value="Chromosome 17"/>
</dbReference>
<dbReference type="RNAct" id="O75352">
    <property type="molecule type" value="protein"/>
</dbReference>
<dbReference type="Bgee" id="ENSG00000129255">
    <property type="expression patterns" value="Expressed in rectum and 153 other cell types or tissues"/>
</dbReference>
<dbReference type="ExpressionAtlas" id="O75352">
    <property type="expression patterns" value="baseline and differential"/>
</dbReference>
<dbReference type="GO" id="GO:0005789">
    <property type="term" value="C:endoplasmic reticulum membrane"/>
    <property type="evidence" value="ECO:0000303"/>
    <property type="project" value="UniProtKB"/>
</dbReference>
<dbReference type="GO" id="GO:0016020">
    <property type="term" value="C:membrane"/>
    <property type="evidence" value="ECO:0007005"/>
    <property type="project" value="UniProtKB"/>
</dbReference>
<dbReference type="GO" id="GO:0006488">
    <property type="term" value="P:dolichol-linked oligosaccharide biosynthetic process"/>
    <property type="evidence" value="ECO:0000304"/>
    <property type="project" value="UniProtKB"/>
</dbReference>
<dbReference type="GO" id="GO:0009312">
    <property type="term" value="P:oligosaccharide biosynthetic process"/>
    <property type="evidence" value="ECO:0000314"/>
    <property type="project" value="UniProtKB"/>
</dbReference>
<dbReference type="GO" id="GO:0006457">
    <property type="term" value="P:protein folding"/>
    <property type="evidence" value="ECO:0000303"/>
    <property type="project" value="UniProtKB"/>
</dbReference>
<dbReference type="FunFam" id="1.20.1280.290:FF:000031">
    <property type="entry name" value="Mannose-P-dolichol utilization defect 1"/>
    <property type="match status" value="1"/>
</dbReference>
<dbReference type="FunFam" id="1.20.1280.290:FF:000006">
    <property type="entry name" value="mannose-P-dolichol utilization defect 1 protein"/>
    <property type="match status" value="1"/>
</dbReference>
<dbReference type="Gene3D" id="1.20.1280.290">
    <property type="match status" value="1"/>
</dbReference>
<dbReference type="InterPro" id="IPR016817">
    <property type="entry name" value="MannP-dilichol_defect-1"/>
</dbReference>
<dbReference type="InterPro" id="IPR006603">
    <property type="entry name" value="PQ-loop_rpt"/>
</dbReference>
<dbReference type="PANTHER" id="PTHR12226">
    <property type="entry name" value="MANNOSE-P-DOLICHOL UTILIZATION DEFECT 1 LEC35 -RELATED"/>
    <property type="match status" value="1"/>
</dbReference>
<dbReference type="PANTHER" id="PTHR12226:SF2">
    <property type="entry name" value="MANNOSE-P-DOLICHOL UTILIZATION DEFECT 1 PROTEIN"/>
    <property type="match status" value="1"/>
</dbReference>
<dbReference type="Pfam" id="PF04193">
    <property type="entry name" value="PQ-loop"/>
    <property type="match status" value="2"/>
</dbReference>
<dbReference type="PIRSF" id="PIRSF023381">
    <property type="entry name" value="MannP-dilichol_defect-1p"/>
    <property type="match status" value="1"/>
</dbReference>
<dbReference type="SMART" id="SM00679">
    <property type="entry name" value="CTNS"/>
    <property type="match status" value="2"/>
</dbReference>
<proteinExistence type="evidence at protein level"/>
<evidence type="ECO:0000250" key="1"/>
<evidence type="ECO:0000255" key="2"/>
<evidence type="ECO:0000269" key="3">
    <source>
    </source>
</evidence>
<evidence type="ECO:0000269" key="4">
    <source>
    </source>
</evidence>
<evidence type="ECO:0000269" key="5">
    <source>
    </source>
</evidence>
<evidence type="ECO:0000303" key="6">
    <source>
    </source>
</evidence>
<evidence type="ECO:0000305" key="7"/>
<evidence type="ECO:0007744" key="8">
    <source>
    </source>
</evidence>
<evidence type="ECO:0007744" key="9">
    <source>
    </source>
</evidence>
<evidence type="ECO:0007744" key="10">
    <source>
    </source>
</evidence>
<reference key="1">
    <citation type="journal article" date="1998" name="Proc. Natl. Acad. Sci. U.S.A.">
        <title>Identification of genes expressed in human CD34(+) hematopoietic stem/progenitor cells by expressed sequence tags and efficient full-length cDNA cloning.</title>
        <authorList>
            <person name="Mao M."/>
            <person name="Fu G."/>
            <person name="Wu J.-S."/>
            <person name="Zhang Q.-H."/>
            <person name="Zhou J."/>
            <person name="Kan L.-X."/>
            <person name="Huang Q.-H."/>
            <person name="He K.-L."/>
            <person name="Gu B.-W."/>
            <person name="Han Z.-G."/>
            <person name="Shen Y."/>
            <person name="Gu J."/>
            <person name="Yu Y.-P."/>
            <person name="Xu S.-H."/>
            <person name="Wang Y.-X."/>
            <person name="Chen S.-J."/>
            <person name="Chen Z."/>
        </authorList>
    </citation>
    <scope>NUCLEOTIDE SEQUENCE [LARGE SCALE MRNA] (ISOFORM 1)</scope>
    <source>
        <tissue>Umbilical cord blood</tissue>
    </source>
</reference>
<reference key="2">
    <citation type="journal article" date="2004" name="Nat. Genet.">
        <title>Complete sequencing and characterization of 21,243 full-length human cDNAs.</title>
        <authorList>
            <person name="Ota T."/>
            <person name="Suzuki Y."/>
            <person name="Nishikawa T."/>
            <person name="Otsuki T."/>
            <person name="Sugiyama T."/>
            <person name="Irie R."/>
            <person name="Wakamatsu A."/>
            <person name="Hayashi K."/>
            <person name="Sato H."/>
            <person name="Nagai K."/>
            <person name="Kimura K."/>
            <person name="Makita H."/>
            <person name="Sekine M."/>
            <person name="Obayashi M."/>
            <person name="Nishi T."/>
            <person name="Shibahara T."/>
            <person name="Tanaka T."/>
            <person name="Ishii S."/>
            <person name="Yamamoto J."/>
            <person name="Saito K."/>
            <person name="Kawai Y."/>
            <person name="Isono Y."/>
            <person name="Nakamura Y."/>
            <person name="Nagahari K."/>
            <person name="Murakami K."/>
            <person name="Yasuda T."/>
            <person name="Iwayanagi T."/>
            <person name="Wagatsuma M."/>
            <person name="Shiratori A."/>
            <person name="Sudo H."/>
            <person name="Hosoiri T."/>
            <person name="Kaku Y."/>
            <person name="Kodaira H."/>
            <person name="Kondo H."/>
            <person name="Sugawara M."/>
            <person name="Takahashi M."/>
            <person name="Kanda K."/>
            <person name="Yokoi T."/>
            <person name="Furuya T."/>
            <person name="Kikkawa E."/>
            <person name="Omura Y."/>
            <person name="Abe K."/>
            <person name="Kamihara K."/>
            <person name="Katsuta N."/>
            <person name="Sato K."/>
            <person name="Tanikawa M."/>
            <person name="Yamazaki M."/>
            <person name="Ninomiya K."/>
            <person name="Ishibashi T."/>
            <person name="Yamashita H."/>
            <person name="Murakawa K."/>
            <person name="Fujimori K."/>
            <person name="Tanai H."/>
            <person name="Kimata M."/>
            <person name="Watanabe M."/>
            <person name="Hiraoka S."/>
            <person name="Chiba Y."/>
            <person name="Ishida S."/>
            <person name="Ono Y."/>
            <person name="Takiguchi S."/>
            <person name="Watanabe S."/>
            <person name="Yosida M."/>
            <person name="Hotuta T."/>
            <person name="Kusano J."/>
            <person name="Kanehori K."/>
            <person name="Takahashi-Fujii A."/>
            <person name="Hara H."/>
            <person name="Tanase T.-O."/>
            <person name="Nomura Y."/>
            <person name="Togiya S."/>
            <person name="Komai F."/>
            <person name="Hara R."/>
            <person name="Takeuchi K."/>
            <person name="Arita M."/>
            <person name="Imose N."/>
            <person name="Musashino K."/>
            <person name="Yuuki H."/>
            <person name="Oshima A."/>
            <person name="Sasaki N."/>
            <person name="Aotsuka S."/>
            <person name="Yoshikawa Y."/>
            <person name="Matsunawa H."/>
            <person name="Ichihara T."/>
            <person name="Shiohata N."/>
            <person name="Sano S."/>
            <person name="Moriya S."/>
            <person name="Momiyama H."/>
            <person name="Satoh N."/>
            <person name="Takami S."/>
            <person name="Terashima Y."/>
            <person name="Suzuki O."/>
            <person name="Nakagawa S."/>
            <person name="Senoh A."/>
            <person name="Mizoguchi H."/>
            <person name="Goto Y."/>
            <person name="Shimizu F."/>
            <person name="Wakebe H."/>
            <person name="Hishigaki H."/>
            <person name="Watanabe T."/>
            <person name="Sugiyama A."/>
            <person name="Takemoto M."/>
            <person name="Kawakami B."/>
            <person name="Yamazaki M."/>
            <person name="Watanabe K."/>
            <person name="Kumagai A."/>
            <person name="Itakura S."/>
            <person name="Fukuzumi Y."/>
            <person name="Fujimori Y."/>
            <person name="Komiyama M."/>
            <person name="Tashiro H."/>
            <person name="Tanigami A."/>
            <person name="Fujiwara T."/>
            <person name="Ono T."/>
            <person name="Yamada K."/>
            <person name="Fujii Y."/>
            <person name="Ozaki K."/>
            <person name="Hirao M."/>
            <person name="Ohmori Y."/>
            <person name="Kawabata A."/>
            <person name="Hikiji T."/>
            <person name="Kobatake N."/>
            <person name="Inagaki H."/>
            <person name="Ikema Y."/>
            <person name="Okamoto S."/>
            <person name="Okitani R."/>
            <person name="Kawakami T."/>
            <person name="Noguchi S."/>
            <person name="Itoh T."/>
            <person name="Shigeta K."/>
            <person name="Senba T."/>
            <person name="Matsumura K."/>
            <person name="Nakajima Y."/>
            <person name="Mizuno T."/>
            <person name="Morinaga M."/>
            <person name="Sasaki M."/>
            <person name="Togashi T."/>
            <person name="Oyama M."/>
            <person name="Hata H."/>
            <person name="Watanabe M."/>
            <person name="Komatsu T."/>
            <person name="Mizushima-Sugano J."/>
            <person name="Satoh T."/>
            <person name="Shirai Y."/>
            <person name="Takahashi Y."/>
            <person name="Nakagawa K."/>
            <person name="Okumura K."/>
            <person name="Nagase T."/>
            <person name="Nomura N."/>
            <person name="Kikuchi H."/>
            <person name="Masuho Y."/>
            <person name="Yamashita R."/>
            <person name="Nakai K."/>
            <person name="Yada T."/>
            <person name="Nakamura Y."/>
            <person name="Ohara O."/>
            <person name="Isogai T."/>
            <person name="Sugano S."/>
        </authorList>
    </citation>
    <scope>NUCLEOTIDE SEQUENCE [LARGE SCALE MRNA] (ISOFORMS 1 AND 2)</scope>
    <source>
        <tissue>Pericardium</tissue>
    </source>
</reference>
<reference key="3">
    <citation type="journal article" date="2006" name="Nature">
        <title>DNA sequence of human chromosome 17 and analysis of rearrangement in the human lineage.</title>
        <authorList>
            <person name="Zody M.C."/>
            <person name="Garber M."/>
            <person name="Adams D.J."/>
            <person name="Sharpe T."/>
            <person name="Harrow J."/>
            <person name="Lupski J.R."/>
            <person name="Nicholson C."/>
            <person name="Searle S.M."/>
            <person name="Wilming L."/>
            <person name="Young S.K."/>
            <person name="Abouelleil A."/>
            <person name="Allen N.R."/>
            <person name="Bi W."/>
            <person name="Bloom T."/>
            <person name="Borowsky M.L."/>
            <person name="Bugalter B.E."/>
            <person name="Butler J."/>
            <person name="Chang J.L."/>
            <person name="Chen C.-K."/>
            <person name="Cook A."/>
            <person name="Corum B."/>
            <person name="Cuomo C.A."/>
            <person name="de Jong P.J."/>
            <person name="DeCaprio D."/>
            <person name="Dewar K."/>
            <person name="FitzGerald M."/>
            <person name="Gilbert J."/>
            <person name="Gibson R."/>
            <person name="Gnerre S."/>
            <person name="Goldstein S."/>
            <person name="Grafham D.V."/>
            <person name="Grocock R."/>
            <person name="Hafez N."/>
            <person name="Hagopian D.S."/>
            <person name="Hart E."/>
            <person name="Norman C.H."/>
            <person name="Humphray S."/>
            <person name="Jaffe D.B."/>
            <person name="Jones M."/>
            <person name="Kamal M."/>
            <person name="Khodiyar V.K."/>
            <person name="LaButti K."/>
            <person name="Laird G."/>
            <person name="Lehoczky J."/>
            <person name="Liu X."/>
            <person name="Lokyitsang T."/>
            <person name="Loveland J."/>
            <person name="Lui A."/>
            <person name="Macdonald P."/>
            <person name="Major J.E."/>
            <person name="Matthews L."/>
            <person name="Mauceli E."/>
            <person name="McCarroll S.A."/>
            <person name="Mihalev A.H."/>
            <person name="Mudge J."/>
            <person name="Nguyen C."/>
            <person name="Nicol R."/>
            <person name="O'Leary S.B."/>
            <person name="Osoegawa K."/>
            <person name="Schwartz D.C."/>
            <person name="Shaw-Smith C."/>
            <person name="Stankiewicz P."/>
            <person name="Steward C."/>
            <person name="Swarbreck D."/>
            <person name="Venkataraman V."/>
            <person name="Whittaker C.A."/>
            <person name="Yang X."/>
            <person name="Zimmer A.R."/>
            <person name="Bradley A."/>
            <person name="Hubbard T."/>
            <person name="Birren B.W."/>
            <person name="Rogers J."/>
            <person name="Lander E.S."/>
            <person name="Nusbaum C."/>
        </authorList>
    </citation>
    <scope>NUCLEOTIDE SEQUENCE [LARGE SCALE GENOMIC DNA]</scope>
</reference>
<reference key="4">
    <citation type="submission" date="2005-09" db="EMBL/GenBank/DDBJ databases">
        <authorList>
            <person name="Mural R.J."/>
            <person name="Istrail S."/>
            <person name="Sutton G.G."/>
            <person name="Florea L."/>
            <person name="Halpern A.L."/>
            <person name="Mobarry C.M."/>
            <person name="Lippert R."/>
            <person name="Walenz B."/>
            <person name="Shatkay H."/>
            <person name="Dew I."/>
            <person name="Miller J.R."/>
            <person name="Flanigan M.J."/>
            <person name="Edwards N.J."/>
            <person name="Bolanos R."/>
            <person name="Fasulo D."/>
            <person name="Halldorsson B.V."/>
            <person name="Hannenhalli S."/>
            <person name="Turner R."/>
            <person name="Yooseph S."/>
            <person name="Lu F."/>
            <person name="Nusskern D.R."/>
            <person name="Shue B.C."/>
            <person name="Zheng X.H."/>
            <person name="Zhong F."/>
            <person name="Delcher A.L."/>
            <person name="Huson D.H."/>
            <person name="Kravitz S.A."/>
            <person name="Mouchard L."/>
            <person name="Reinert K."/>
            <person name="Remington K.A."/>
            <person name="Clark A.G."/>
            <person name="Waterman M.S."/>
            <person name="Eichler E.E."/>
            <person name="Adams M.D."/>
            <person name="Hunkapiller M.W."/>
            <person name="Myers E.W."/>
            <person name="Venter J.C."/>
        </authorList>
    </citation>
    <scope>NUCLEOTIDE SEQUENCE [LARGE SCALE GENOMIC DNA]</scope>
</reference>
<reference key="5">
    <citation type="journal article" date="2004" name="Genome Res.">
        <title>The status, quality, and expansion of the NIH full-length cDNA project: the Mammalian Gene Collection (MGC).</title>
        <authorList>
            <consortium name="The MGC Project Team"/>
        </authorList>
    </citation>
    <scope>NUCLEOTIDE SEQUENCE [LARGE SCALE MRNA] (ISOFORM 1)</scope>
    <scope>VARIANT THR-229</scope>
    <source>
        <tissue>Lung</tissue>
    </source>
</reference>
<reference key="6">
    <citation type="journal article" date="2009" name="Anal. Chem.">
        <title>Lys-N and trypsin cover complementary parts of the phosphoproteome in a refined SCX-based approach.</title>
        <authorList>
            <person name="Gauci S."/>
            <person name="Helbig A.O."/>
            <person name="Slijper M."/>
            <person name="Krijgsveld J."/>
            <person name="Heck A.J."/>
            <person name="Mohammed S."/>
        </authorList>
    </citation>
    <scope>ACETYLATION [LARGE SCALE ANALYSIS] AT ALA-2</scope>
    <scope>CLEAVAGE OF INITIATOR METHIONINE [LARGE SCALE ANALYSIS]</scope>
    <scope>IDENTIFICATION BY MASS SPECTROMETRY [LARGE SCALE ANALYSIS]</scope>
</reference>
<reference key="7">
    <citation type="journal article" date="2011" name="BMC Syst. Biol.">
        <title>Initial characterization of the human central proteome.</title>
        <authorList>
            <person name="Burkard T.R."/>
            <person name="Planyavsky M."/>
            <person name="Kaupe I."/>
            <person name="Breitwieser F.P."/>
            <person name="Buerckstuemmer T."/>
            <person name="Bennett K.L."/>
            <person name="Superti-Furga G."/>
            <person name="Colinge J."/>
        </authorList>
    </citation>
    <scope>IDENTIFICATION BY MASS SPECTROMETRY [LARGE SCALE ANALYSIS]</scope>
</reference>
<reference key="8">
    <citation type="journal article" date="2012" name="Proc. Natl. Acad. Sci. U.S.A.">
        <title>N-terminal acetylome analyses and functional insights of the N-terminal acetyltransferase NatB.</title>
        <authorList>
            <person name="Van Damme P."/>
            <person name="Lasa M."/>
            <person name="Polevoda B."/>
            <person name="Gazquez C."/>
            <person name="Elosegui-Artola A."/>
            <person name="Kim D.S."/>
            <person name="De Juan-Pardo E."/>
            <person name="Demeyer K."/>
            <person name="Hole K."/>
            <person name="Larrea E."/>
            <person name="Timmerman E."/>
            <person name="Prieto J."/>
            <person name="Arnesen T."/>
            <person name="Sherman F."/>
            <person name="Gevaert K."/>
            <person name="Aldabe R."/>
        </authorList>
    </citation>
    <scope>ACETYLATION [LARGE SCALE ANALYSIS] AT ALA-2</scope>
    <scope>CLEAVAGE OF INITIATOR METHIONINE [LARGE SCALE ANALYSIS]</scope>
    <scope>IDENTIFICATION BY MASS SPECTROMETRY [LARGE SCALE ANALYSIS]</scope>
</reference>
<reference key="9">
    <citation type="journal article" date="2015" name="Proteomics">
        <title>N-terminome analysis of the human mitochondrial proteome.</title>
        <authorList>
            <person name="Vaca Jacome A.S."/>
            <person name="Rabilloud T."/>
            <person name="Schaeffer-Reiss C."/>
            <person name="Rompais M."/>
            <person name="Ayoub D."/>
            <person name="Lane L."/>
            <person name="Bairoch A."/>
            <person name="Van Dorsselaer A."/>
            <person name="Carapito C."/>
        </authorList>
    </citation>
    <scope>ACETYLATION [LARGE SCALE ANALYSIS] AT ALA-2</scope>
    <scope>CLEAVAGE OF INITIATOR METHIONINE [LARGE SCALE ANALYSIS]</scope>
    <scope>IDENTIFICATION BY MASS SPECTROMETRY [LARGE SCALE ANALYSIS]</scope>
</reference>
<reference key="10">
    <citation type="journal article" date="2001" name="J. Clin. Invest.">
        <title>A mutation in the human MPDU1 gene causes congenital disorder of glycosylation type If (CDG-If).</title>
        <authorList>
            <person name="Kranz C."/>
            <person name="Denecke J."/>
            <person name="Lehrman M.A."/>
            <person name="Ray S."/>
            <person name="Kienz P."/>
            <person name="Kreissel G."/>
            <person name="Sagi D."/>
            <person name="Peter-Katalinic J."/>
            <person name="Freeze H.H."/>
            <person name="Schmid T."/>
            <person name="Jackowski-Dohrmann S."/>
            <person name="Harms E."/>
            <person name="Marquardt T."/>
        </authorList>
    </citation>
    <scope>VARIANT CDG1F SER-74</scope>
</reference>
<reference key="11">
    <citation type="journal article" date="2001" name="J. Clin. Invest.">
        <title>MPDU1 mutations underlie a novel human congenital disorder of glycosylation, designated type If.</title>
        <authorList>
            <person name="Schenk B."/>
            <person name="Imbach T."/>
            <person name="Frank C.G."/>
            <person name="Grubenmann C.E."/>
            <person name="Raymond G.V."/>
            <person name="Hurvitz H."/>
            <person name="Raas-Rotschild A."/>
            <person name="Luder A.S."/>
            <person name="Jaeken J."/>
            <person name="Berger E.G."/>
            <person name="Matthijs G."/>
            <person name="Hennet T."/>
            <person name="Aebi M."/>
        </authorList>
    </citation>
    <scope>VARIANTS CDG1F GLU-73 AND PRO-119</scope>
</reference>
<reference key="12">
    <citation type="journal article" date="2001" name="J. Clin. Invest.">
        <authorList>
            <person name="Schenk B."/>
            <person name="Imbach T."/>
            <person name="Frank C.G."/>
            <person name="Grubenmann C.E."/>
            <person name="Raymond G.V."/>
            <person name="Hurvitz H."/>
            <person name="Korn-Lubetzki I."/>
            <person name="Revel-Vik S."/>
            <person name="Raas-Rotschild A."/>
            <person name="Luder A.S."/>
            <person name="Jaeken J."/>
            <person name="Berger E.G."/>
            <person name="Matthijs G."/>
            <person name="Hennet T."/>
            <person name="Aebi M."/>
        </authorList>
    </citation>
    <scope>ERRATUM OF PUBMED:11733564</scope>
</reference>
<gene>
    <name type="primary">MPDU1</name>
</gene>
<protein>
    <recommendedName>
        <fullName>Mannose-P-dolichol utilization defect 1 protein</fullName>
    </recommendedName>
    <alternativeName>
        <fullName>Suppressor of Lec15 and Lec35 glycosylation mutation homolog</fullName>
        <shortName>SL15</shortName>
    </alternativeName>
</protein>